<proteinExistence type="predicted"/>
<accession>Q1LXZ7</accession>
<protein>
    <recommendedName>
        <fullName>IQ motif-containing protein H</fullName>
    </recommendedName>
</protein>
<reference key="1">
    <citation type="journal article" date="2013" name="Nature">
        <title>The zebrafish reference genome sequence and its relationship to the human genome.</title>
        <authorList>
            <person name="Howe K."/>
            <person name="Clark M.D."/>
            <person name="Torroja C.F."/>
            <person name="Torrance J."/>
            <person name="Berthelot C."/>
            <person name="Muffato M."/>
            <person name="Collins J.E."/>
            <person name="Humphray S."/>
            <person name="McLaren K."/>
            <person name="Matthews L."/>
            <person name="McLaren S."/>
            <person name="Sealy I."/>
            <person name="Caccamo M."/>
            <person name="Churcher C."/>
            <person name="Scott C."/>
            <person name="Barrett J.C."/>
            <person name="Koch R."/>
            <person name="Rauch G.J."/>
            <person name="White S."/>
            <person name="Chow W."/>
            <person name="Kilian B."/>
            <person name="Quintais L.T."/>
            <person name="Guerra-Assuncao J.A."/>
            <person name="Zhou Y."/>
            <person name="Gu Y."/>
            <person name="Yen J."/>
            <person name="Vogel J.H."/>
            <person name="Eyre T."/>
            <person name="Redmond S."/>
            <person name="Banerjee R."/>
            <person name="Chi J."/>
            <person name="Fu B."/>
            <person name="Langley E."/>
            <person name="Maguire S.F."/>
            <person name="Laird G.K."/>
            <person name="Lloyd D."/>
            <person name="Kenyon E."/>
            <person name="Donaldson S."/>
            <person name="Sehra H."/>
            <person name="Almeida-King J."/>
            <person name="Loveland J."/>
            <person name="Trevanion S."/>
            <person name="Jones M."/>
            <person name="Quail M."/>
            <person name="Willey D."/>
            <person name="Hunt A."/>
            <person name="Burton J."/>
            <person name="Sims S."/>
            <person name="McLay K."/>
            <person name="Plumb B."/>
            <person name="Davis J."/>
            <person name="Clee C."/>
            <person name="Oliver K."/>
            <person name="Clark R."/>
            <person name="Riddle C."/>
            <person name="Elliot D."/>
            <person name="Threadgold G."/>
            <person name="Harden G."/>
            <person name="Ware D."/>
            <person name="Begum S."/>
            <person name="Mortimore B."/>
            <person name="Kerry G."/>
            <person name="Heath P."/>
            <person name="Phillimore B."/>
            <person name="Tracey A."/>
            <person name="Corby N."/>
            <person name="Dunn M."/>
            <person name="Johnson C."/>
            <person name="Wood J."/>
            <person name="Clark S."/>
            <person name="Pelan S."/>
            <person name="Griffiths G."/>
            <person name="Smith M."/>
            <person name="Glithero R."/>
            <person name="Howden P."/>
            <person name="Barker N."/>
            <person name="Lloyd C."/>
            <person name="Stevens C."/>
            <person name="Harley J."/>
            <person name="Holt K."/>
            <person name="Panagiotidis G."/>
            <person name="Lovell J."/>
            <person name="Beasley H."/>
            <person name="Henderson C."/>
            <person name="Gordon D."/>
            <person name="Auger K."/>
            <person name="Wright D."/>
            <person name="Collins J."/>
            <person name="Raisen C."/>
            <person name="Dyer L."/>
            <person name="Leung K."/>
            <person name="Robertson L."/>
            <person name="Ambridge K."/>
            <person name="Leongamornlert D."/>
            <person name="McGuire S."/>
            <person name="Gilderthorp R."/>
            <person name="Griffiths C."/>
            <person name="Manthravadi D."/>
            <person name="Nichol S."/>
            <person name="Barker G."/>
            <person name="Whitehead S."/>
            <person name="Kay M."/>
            <person name="Brown J."/>
            <person name="Murnane C."/>
            <person name="Gray E."/>
            <person name="Humphries M."/>
            <person name="Sycamore N."/>
            <person name="Barker D."/>
            <person name="Saunders D."/>
            <person name="Wallis J."/>
            <person name="Babbage A."/>
            <person name="Hammond S."/>
            <person name="Mashreghi-Mohammadi M."/>
            <person name="Barr L."/>
            <person name="Martin S."/>
            <person name="Wray P."/>
            <person name="Ellington A."/>
            <person name="Matthews N."/>
            <person name="Ellwood M."/>
            <person name="Woodmansey R."/>
            <person name="Clark G."/>
            <person name="Cooper J."/>
            <person name="Tromans A."/>
            <person name="Grafham D."/>
            <person name="Skuce C."/>
            <person name="Pandian R."/>
            <person name="Andrews R."/>
            <person name="Harrison E."/>
            <person name="Kimberley A."/>
            <person name="Garnett J."/>
            <person name="Fosker N."/>
            <person name="Hall R."/>
            <person name="Garner P."/>
            <person name="Kelly D."/>
            <person name="Bird C."/>
            <person name="Palmer S."/>
            <person name="Gehring I."/>
            <person name="Berger A."/>
            <person name="Dooley C.M."/>
            <person name="Ersan-Urun Z."/>
            <person name="Eser C."/>
            <person name="Geiger H."/>
            <person name="Geisler M."/>
            <person name="Karotki L."/>
            <person name="Kirn A."/>
            <person name="Konantz J."/>
            <person name="Konantz M."/>
            <person name="Oberlander M."/>
            <person name="Rudolph-Geiger S."/>
            <person name="Teucke M."/>
            <person name="Lanz C."/>
            <person name="Raddatz G."/>
            <person name="Osoegawa K."/>
            <person name="Zhu B."/>
            <person name="Rapp A."/>
            <person name="Widaa S."/>
            <person name="Langford C."/>
            <person name="Yang F."/>
            <person name="Schuster S.C."/>
            <person name="Carter N.P."/>
            <person name="Harrow J."/>
            <person name="Ning Z."/>
            <person name="Herrero J."/>
            <person name="Searle S.M."/>
            <person name="Enright A."/>
            <person name="Geisler R."/>
            <person name="Plasterk R.H."/>
            <person name="Lee C."/>
            <person name="Westerfield M."/>
            <person name="de Jong P.J."/>
            <person name="Zon L.I."/>
            <person name="Postlethwait J.H."/>
            <person name="Nusslein-Volhard C."/>
            <person name="Hubbard T.J."/>
            <person name="Roest Crollius H."/>
            <person name="Rogers J."/>
            <person name="Stemple D.L."/>
        </authorList>
    </citation>
    <scope>NUCLEOTIDE SEQUENCE [LARGE SCALE GENOMIC DNA]</scope>
    <source>
        <strain>Tuebingen</strain>
    </source>
</reference>
<feature type="chain" id="PRO_0000282567" description="IQ motif-containing protein H">
    <location>
        <begin position="1"/>
        <end position="1059"/>
    </location>
</feature>
<feature type="domain" description="IQ" evidence="2">
    <location>
        <begin position="401"/>
        <end position="430"/>
    </location>
</feature>
<feature type="region of interest" description="Disordered" evidence="3">
    <location>
        <begin position="245"/>
        <end position="267"/>
    </location>
</feature>
<feature type="coiled-coil region" evidence="1">
    <location>
        <begin position="6"/>
        <end position="35"/>
    </location>
</feature>
<evidence type="ECO:0000255" key="1"/>
<evidence type="ECO:0000255" key="2">
    <source>
        <dbReference type="PROSITE-ProRule" id="PRU00116"/>
    </source>
</evidence>
<evidence type="ECO:0000256" key="3">
    <source>
        <dbReference type="SAM" id="MobiDB-lite"/>
    </source>
</evidence>
<name>IQCH_DANRE</name>
<keyword id="KW-0175">Coiled coil</keyword>
<keyword id="KW-1185">Reference proteome</keyword>
<gene>
    <name type="primary">iqch</name>
    <name type="ORF">si:dkey-246a16.2</name>
</gene>
<sequence>MASVLKNKDEVGNILVKVQDDLRQLKKNIVQFTVQENGEILDIQALDAAIIRTENGIRRHAEDYLKTINNQVLTLPSIEEPEKKTAHPKLVTWQPPYEALPIAHPHRSPIPGPSPGEKHKTAFIMRLLHNPFHPRNKEIFQQNYGIQLPHLQKRTSIGIQRVVTGSNLGNFAIAHLQPKPPPECQDAVAELQPSAADLSSVQTPVQPKAVHVLQREDSGQNESKKVYKQEMDVRRDGMALRRSAMESAESRLLRAPPPSAASASSDNRVLTRGLARLSPINPQSLPVPAVVSKYPFTIVDGQIDPDAADFCRYKKQYCLYWGAMVEALERLQRMLLDFAVPLARVCGERLAACVQSGELNWRDGRGRCTHVEKLLSVLENRDEVWDLMCQPGQRYKGNGGHQAAAVRIQTCWRRYSARTAYLIRLRSKWAAEIIAMSLLKRAKLCHLKKSLQASRLRQLENFHSRAESLATNWKHITSAKRTIIHVPSLGYSQPRRLSLRGYDVLQNTQMGRLCDIRDENVEVIYVSPVRLGEDVLQYYTRLLGLQTAIELGDASATESHSAKRFTILMPEALEDFSTRNLCLASLLKYSPRTLKRIKNLIKGKQAYMISGVTHTDDLAVADELQIPLLGTDPVVTQLYSTKSGGKRIFSSAGVDMPPGKWDIYTLEKLYEGLAQLMAKHMEVQRWLFKIDSEVGGRGTAYVDVCHLKSRPWAQQEFIRHEPQQWRTSQSQDSVMIKFLEEVPHLLASYARLANTSCYKTWACFLEHFLKEGGVIEAFPPSQSLTCLAVDLLLEPGGDVLMLSCGDQLRGPSGLEVLGCTVPQTSICPEVLHSVCTRVGQACQQRSIMGHISLDLVTFLDPNNLEQQVWAIDLDLGYSNQLAMTQLMLMMTRGTLNCRTSKLEVPPSETSVTSRFAVMCTRLLHTNLPLVYYSTFFLMCKAQGIGYDVKARQGTVFALHDSRYRRSLGMLTISENLQGALLTFARNLSIIHQEISAPNMQGASNFKELIKDIEEVLGMTIQNQTASQEEKEITGVGSDWLSTHKLHQHKMSQCTKPILQ</sequence>
<organism>
    <name type="scientific">Danio rerio</name>
    <name type="common">Zebrafish</name>
    <name type="synonym">Brachydanio rerio</name>
    <dbReference type="NCBI Taxonomy" id="7955"/>
    <lineage>
        <taxon>Eukaryota</taxon>
        <taxon>Metazoa</taxon>
        <taxon>Chordata</taxon>
        <taxon>Craniata</taxon>
        <taxon>Vertebrata</taxon>
        <taxon>Euteleostomi</taxon>
        <taxon>Actinopterygii</taxon>
        <taxon>Neopterygii</taxon>
        <taxon>Teleostei</taxon>
        <taxon>Ostariophysi</taxon>
        <taxon>Cypriniformes</taxon>
        <taxon>Danionidae</taxon>
        <taxon>Danioninae</taxon>
        <taxon>Danio</taxon>
    </lineage>
</organism>
<dbReference type="EMBL" id="BX247951">
    <property type="protein sequence ID" value="CAK10802.1"/>
    <property type="molecule type" value="Genomic_DNA"/>
</dbReference>
<dbReference type="RefSeq" id="NP_001038594.1">
    <property type="nucleotide sequence ID" value="NM_001045129.1"/>
</dbReference>
<dbReference type="FunCoup" id="Q1LXZ7">
    <property type="interactions" value="68"/>
</dbReference>
<dbReference type="STRING" id="7955.ENSDARP00000115882"/>
<dbReference type="PaxDb" id="7955-ENSDARP00000074143"/>
<dbReference type="Ensembl" id="ENSDART00000135049">
    <property type="protein sequence ID" value="ENSDARP00000115882"/>
    <property type="gene ID" value="ENSDARG00000015476"/>
</dbReference>
<dbReference type="GeneID" id="567336"/>
<dbReference type="KEGG" id="dre:567336"/>
<dbReference type="AGR" id="ZFIN:ZDB-GENE-050419-242"/>
<dbReference type="CTD" id="64799"/>
<dbReference type="ZFIN" id="ZDB-GENE-050419-242">
    <property type="gene designation" value="iqch"/>
</dbReference>
<dbReference type="eggNOG" id="ENOG502QSF3">
    <property type="taxonomic scope" value="Eukaryota"/>
</dbReference>
<dbReference type="HOGENOM" id="CLU_008013_0_0_1"/>
<dbReference type="InParanoid" id="Q1LXZ7"/>
<dbReference type="OrthoDB" id="2117703at2759"/>
<dbReference type="PhylomeDB" id="Q1LXZ7"/>
<dbReference type="PRO" id="PR:Q1LXZ7"/>
<dbReference type="Proteomes" id="UP000000437">
    <property type="component" value="Alternate scaffold 18"/>
</dbReference>
<dbReference type="Proteomes" id="UP000000437">
    <property type="component" value="Chromosome 18"/>
</dbReference>
<dbReference type="Bgee" id="ENSDARG00000015476">
    <property type="expression patterns" value="Expressed in testis and 8 other cell types or tissues"/>
</dbReference>
<dbReference type="ExpressionAtlas" id="Q1LXZ7">
    <property type="expression patterns" value="baseline"/>
</dbReference>
<dbReference type="InterPro" id="IPR056855">
    <property type="entry name" value="ATP-grasp_IQCH"/>
</dbReference>
<dbReference type="InterPro" id="IPR038752">
    <property type="entry name" value="IQCH"/>
</dbReference>
<dbReference type="PANTHER" id="PTHR14465">
    <property type="entry name" value="IQ DOMAIN-CONTAINING PROTEIN H"/>
    <property type="match status" value="1"/>
</dbReference>
<dbReference type="PANTHER" id="PTHR14465:SF0">
    <property type="entry name" value="IQ DOMAIN-CONTAINING PROTEIN H"/>
    <property type="match status" value="1"/>
</dbReference>
<dbReference type="Pfam" id="PF24923">
    <property type="entry name" value="ATP-grasp_IQCH"/>
    <property type="match status" value="1"/>
</dbReference>
<dbReference type="PROSITE" id="PS50096">
    <property type="entry name" value="IQ"/>
    <property type="match status" value="1"/>
</dbReference>